<comment type="function">
    <text evidence="2">GTP hydrolase that promotes the GTP-dependent binding of aminoacyl-tRNA to the A-site of ribosomes during protein biosynthesis.</text>
</comment>
<comment type="catalytic activity">
    <reaction evidence="2">
        <text>GTP + H2O = GDP + phosphate + H(+)</text>
        <dbReference type="Rhea" id="RHEA:19669"/>
        <dbReference type="ChEBI" id="CHEBI:15377"/>
        <dbReference type="ChEBI" id="CHEBI:15378"/>
        <dbReference type="ChEBI" id="CHEBI:37565"/>
        <dbReference type="ChEBI" id="CHEBI:43474"/>
        <dbReference type="ChEBI" id="CHEBI:58189"/>
        <dbReference type="EC" id="3.6.5.3"/>
    </reaction>
    <physiologicalReaction direction="left-to-right" evidence="2">
        <dbReference type="Rhea" id="RHEA:19670"/>
    </physiologicalReaction>
</comment>
<comment type="subcellular location">
    <subcellularLocation>
        <location evidence="2">Cytoplasm</location>
    </subcellularLocation>
</comment>
<comment type="similarity">
    <text evidence="2">Belongs to the TRAFAC class translation factor GTPase superfamily. Classic translation factor GTPase family. EF-Tu/EF-1A subfamily.</text>
</comment>
<protein>
    <recommendedName>
        <fullName evidence="2">Elongation factor 1-alpha</fullName>
        <shortName evidence="2">EF-1-alpha</shortName>
        <ecNumber evidence="2">3.6.5.3</ecNumber>
    </recommendedName>
    <alternativeName>
        <fullName evidence="2">Elongation factor Tu</fullName>
        <shortName evidence="2">EF-Tu</shortName>
    </alternativeName>
</protein>
<gene>
    <name evidence="2" type="primary">tuf</name>
    <name type="ordered locus">TON_0752</name>
</gene>
<keyword id="KW-0963">Cytoplasm</keyword>
<keyword id="KW-0251">Elongation factor</keyword>
<keyword id="KW-0342">GTP-binding</keyword>
<keyword id="KW-0378">Hydrolase</keyword>
<keyword id="KW-0460">Magnesium</keyword>
<keyword id="KW-0479">Metal-binding</keyword>
<keyword id="KW-0547">Nucleotide-binding</keyword>
<keyword id="KW-0648">Protein biosynthesis</keyword>
<dbReference type="EC" id="3.6.5.3" evidence="2"/>
<dbReference type="EMBL" id="CP000855">
    <property type="protein sequence ID" value="ACJ16240.1"/>
    <property type="molecule type" value="Genomic_DNA"/>
</dbReference>
<dbReference type="RefSeq" id="WP_012571712.1">
    <property type="nucleotide sequence ID" value="NC_011529.1"/>
</dbReference>
<dbReference type="SMR" id="B6YVG2"/>
<dbReference type="STRING" id="523850.TON_0752"/>
<dbReference type="GeneID" id="7017055"/>
<dbReference type="KEGG" id="ton:TON_0752"/>
<dbReference type="PATRIC" id="fig|523850.10.peg.756"/>
<dbReference type="eggNOG" id="arCOG01561">
    <property type="taxonomic scope" value="Archaea"/>
</dbReference>
<dbReference type="HOGENOM" id="CLU_007265_3_5_2"/>
<dbReference type="OrthoDB" id="371718at2157"/>
<dbReference type="Proteomes" id="UP000002727">
    <property type="component" value="Chromosome"/>
</dbReference>
<dbReference type="GO" id="GO:0005737">
    <property type="term" value="C:cytoplasm"/>
    <property type="evidence" value="ECO:0007669"/>
    <property type="project" value="UniProtKB-SubCell"/>
</dbReference>
<dbReference type="GO" id="GO:0005525">
    <property type="term" value="F:GTP binding"/>
    <property type="evidence" value="ECO:0007669"/>
    <property type="project" value="UniProtKB-UniRule"/>
</dbReference>
<dbReference type="GO" id="GO:0003924">
    <property type="term" value="F:GTPase activity"/>
    <property type="evidence" value="ECO:0007669"/>
    <property type="project" value="InterPro"/>
</dbReference>
<dbReference type="GO" id="GO:0003746">
    <property type="term" value="F:translation elongation factor activity"/>
    <property type="evidence" value="ECO:0007669"/>
    <property type="project" value="UniProtKB-UniRule"/>
</dbReference>
<dbReference type="CDD" id="cd01883">
    <property type="entry name" value="EF1_alpha"/>
    <property type="match status" value="1"/>
</dbReference>
<dbReference type="CDD" id="cd03693">
    <property type="entry name" value="EF1_alpha_II"/>
    <property type="match status" value="1"/>
</dbReference>
<dbReference type="CDD" id="cd03705">
    <property type="entry name" value="EF1_alpha_III"/>
    <property type="match status" value="1"/>
</dbReference>
<dbReference type="FunFam" id="2.40.30.10:FF:000003">
    <property type="entry name" value="Elongation factor 1-alpha"/>
    <property type="match status" value="1"/>
</dbReference>
<dbReference type="FunFam" id="2.40.30.10:FF:000005">
    <property type="entry name" value="Elongation factor 1-alpha"/>
    <property type="match status" value="1"/>
</dbReference>
<dbReference type="Gene3D" id="3.40.50.300">
    <property type="entry name" value="P-loop containing nucleotide triphosphate hydrolases"/>
    <property type="match status" value="1"/>
</dbReference>
<dbReference type="Gene3D" id="2.40.30.10">
    <property type="entry name" value="Translation factors"/>
    <property type="match status" value="2"/>
</dbReference>
<dbReference type="HAMAP" id="MF_00118_A">
    <property type="entry name" value="EF_Tu_A"/>
    <property type="match status" value="1"/>
</dbReference>
<dbReference type="InterPro" id="IPR004161">
    <property type="entry name" value="EFTu-like_2"/>
</dbReference>
<dbReference type="InterPro" id="IPR031157">
    <property type="entry name" value="G_TR_CS"/>
</dbReference>
<dbReference type="InterPro" id="IPR054696">
    <property type="entry name" value="GTP-eEF1A_C"/>
</dbReference>
<dbReference type="InterPro" id="IPR027417">
    <property type="entry name" value="P-loop_NTPase"/>
</dbReference>
<dbReference type="InterPro" id="IPR005225">
    <property type="entry name" value="Small_GTP-bd"/>
</dbReference>
<dbReference type="InterPro" id="IPR000795">
    <property type="entry name" value="T_Tr_GTP-bd_dom"/>
</dbReference>
<dbReference type="InterPro" id="IPR050100">
    <property type="entry name" value="TRAFAC_GTPase_members"/>
</dbReference>
<dbReference type="InterPro" id="IPR009000">
    <property type="entry name" value="Transl_B-barrel_sf"/>
</dbReference>
<dbReference type="InterPro" id="IPR009001">
    <property type="entry name" value="Transl_elong_EF1A/Init_IF2_C"/>
</dbReference>
<dbReference type="InterPro" id="IPR004539">
    <property type="entry name" value="Transl_elong_EF1A_euk/arc"/>
</dbReference>
<dbReference type="NCBIfam" id="TIGR00483">
    <property type="entry name" value="EF-1_alpha"/>
    <property type="match status" value="1"/>
</dbReference>
<dbReference type="NCBIfam" id="NF008969">
    <property type="entry name" value="PRK12317.1"/>
    <property type="match status" value="1"/>
</dbReference>
<dbReference type="NCBIfam" id="TIGR00231">
    <property type="entry name" value="small_GTP"/>
    <property type="match status" value="1"/>
</dbReference>
<dbReference type="PANTHER" id="PTHR23115">
    <property type="entry name" value="TRANSLATION FACTOR"/>
    <property type="match status" value="1"/>
</dbReference>
<dbReference type="Pfam" id="PF22594">
    <property type="entry name" value="GTP-eEF1A_C"/>
    <property type="match status" value="1"/>
</dbReference>
<dbReference type="Pfam" id="PF00009">
    <property type="entry name" value="GTP_EFTU"/>
    <property type="match status" value="1"/>
</dbReference>
<dbReference type="Pfam" id="PF03144">
    <property type="entry name" value="GTP_EFTU_D2"/>
    <property type="match status" value="1"/>
</dbReference>
<dbReference type="PRINTS" id="PR00315">
    <property type="entry name" value="ELONGATNFCT"/>
</dbReference>
<dbReference type="SUPFAM" id="SSF50465">
    <property type="entry name" value="EF-Tu/eEF-1alpha/eIF2-gamma C-terminal domain"/>
    <property type="match status" value="1"/>
</dbReference>
<dbReference type="SUPFAM" id="SSF52540">
    <property type="entry name" value="P-loop containing nucleoside triphosphate hydrolases"/>
    <property type="match status" value="1"/>
</dbReference>
<dbReference type="SUPFAM" id="SSF50447">
    <property type="entry name" value="Translation proteins"/>
    <property type="match status" value="1"/>
</dbReference>
<dbReference type="PROSITE" id="PS00301">
    <property type="entry name" value="G_TR_1"/>
    <property type="match status" value="1"/>
</dbReference>
<dbReference type="PROSITE" id="PS51722">
    <property type="entry name" value="G_TR_2"/>
    <property type="match status" value="1"/>
</dbReference>
<organism>
    <name type="scientific">Thermococcus onnurineus (strain NA1)</name>
    <dbReference type="NCBI Taxonomy" id="523850"/>
    <lineage>
        <taxon>Archaea</taxon>
        <taxon>Methanobacteriati</taxon>
        <taxon>Methanobacteriota</taxon>
        <taxon>Thermococci</taxon>
        <taxon>Thermococcales</taxon>
        <taxon>Thermococcaceae</taxon>
        <taxon>Thermococcus</taxon>
    </lineage>
</organism>
<reference key="1">
    <citation type="journal article" date="2008" name="J. Bacteriol.">
        <title>The complete genome sequence of Thermococcus onnurineus NA1 reveals a mixed heterotrophic and carboxydotrophic metabolism.</title>
        <authorList>
            <person name="Lee H.S."/>
            <person name="Kang S.G."/>
            <person name="Bae S.S."/>
            <person name="Lim J.K."/>
            <person name="Cho Y."/>
            <person name="Kim Y.J."/>
            <person name="Jeon J.H."/>
            <person name="Cha S.-S."/>
            <person name="Kwon K.K."/>
            <person name="Kim H.-T."/>
            <person name="Park C.-J."/>
            <person name="Lee H.-W."/>
            <person name="Kim S.I."/>
            <person name="Chun J."/>
            <person name="Colwell R.R."/>
            <person name="Kim S.-J."/>
            <person name="Lee J.-H."/>
        </authorList>
    </citation>
    <scope>NUCLEOTIDE SEQUENCE [LARGE SCALE GENOMIC DNA]</scope>
    <source>
        <strain>NA1</strain>
    </source>
</reference>
<proteinExistence type="inferred from homology"/>
<sequence length="428" mass="47500">MAKEKPHVNIVFIGHVDHGKSTTIGRLLFDTANIPENIIKKFEEMGEKGKSFKFAWVMDRLKEERERGITIDVAHTKFETPHRYITIIDAPGHRDFVKNMITGASQADAAVLVVAATDGVMPQTKEHAFLARTLGIGHIIVAINKMDMVDYDEKKFKQVSEQVKKLLMMLGYKDFPIIPISAWEGDNVVKKSDKMPWYNGPTLIEALDQIPEPPKPTDKPLRIPIQDVYSIKGVGTVPVGRVETGVLRVGDVVIFEPASTIFHKPIQGEVKSIEMHHEPMQEALPGDNIGFNVRGVGKNDIKRGDVAGHTNNPPTVVRPKDTFKAQIIVLNHPTAITIGYTPVLHAHTLQVAVRFEQLLAKLDPRTGNVVEENPQFIKTGDSAIVVLRPTKPMVIEPVKEIPQMGRFAIRDMGQTVAAGMVISIQKAE</sequence>
<feature type="chain" id="PRO_1000095094" description="Elongation factor 1-alpha">
    <location>
        <begin position="1"/>
        <end position="428"/>
    </location>
</feature>
<feature type="domain" description="tr-type G">
    <location>
        <begin position="5"/>
        <end position="215"/>
    </location>
</feature>
<feature type="region of interest" description="G1" evidence="1">
    <location>
        <begin position="14"/>
        <end position="21"/>
    </location>
</feature>
<feature type="region of interest" description="G2" evidence="1">
    <location>
        <begin position="68"/>
        <end position="72"/>
    </location>
</feature>
<feature type="region of interest" description="G3" evidence="1">
    <location>
        <begin position="89"/>
        <end position="92"/>
    </location>
</feature>
<feature type="region of interest" description="G4" evidence="1">
    <location>
        <begin position="144"/>
        <end position="147"/>
    </location>
</feature>
<feature type="region of interest" description="G5" evidence="1">
    <location>
        <begin position="181"/>
        <end position="183"/>
    </location>
</feature>
<feature type="binding site" evidence="2">
    <location>
        <begin position="14"/>
        <end position="21"/>
    </location>
    <ligand>
        <name>GTP</name>
        <dbReference type="ChEBI" id="CHEBI:37565"/>
    </ligand>
</feature>
<feature type="binding site" evidence="2">
    <location>
        <position position="21"/>
    </location>
    <ligand>
        <name>Mg(2+)</name>
        <dbReference type="ChEBI" id="CHEBI:18420"/>
    </ligand>
</feature>
<feature type="binding site" evidence="2">
    <location>
        <begin position="89"/>
        <end position="93"/>
    </location>
    <ligand>
        <name>GTP</name>
        <dbReference type="ChEBI" id="CHEBI:37565"/>
    </ligand>
</feature>
<feature type="binding site" evidence="2">
    <location>
        <begin position="144"/>
        <end position="147"/>
    </location>
    <ligand>
        <name>GTP</name>
        <dbReference type="ChEBI" id="CHEBI:37565"/>
    </ligand>
</feature>
<accession>B6YVG2</accession>
<name>EF1A_THEON</name>
<evidence type="ECO:0000250" key="1"/>
<evidence type="ECO:0000255" key="2">
    <source>
        <dbReference type="HAMAP-Rule" id="MF_00118"/>
    </source>
</evidence>